<gene>
    <name evidence="1" type="primary">hisA</name>
    <name type="ordered locus">Nmul_A0815</name>
</gene>
<reference key="1">
    <citation type="submission" date="2005-08" db="EMBL/GenBank/DDBJ databases">
        <title>Complete sequence of chromosome 1 of Nitrosospira multiformis ATCC 25196.</title>
        <authorList>
            <person name="Copeland A."/>
            <person name="Lucas S."/>
            <person name="Lapidus A."/>
            <person name="Barry K."/>
            <person name="Detter J.C."/>
            <person name="Glavina T."/>
            <person name="Hammon N."/>
            <person name="Israni S."/>
            <person name="Pitluck S."/>
            <person name="Chain P."/>
            <person name="Malfatti S."/>
            <person name="Shin M."/>
            <person name="Vergez L."/>
            <person name="Schmutz J."/>
            <person name="Larimer F."/>
            <person name="Land M."/>
            <person name="Hauser L."/>
            <person name="Kyrpides N."/>
            <person name="Lykidis A."/>
            <person name="Richardson P."/>
        </authorList>
    </citation>
    <scope>NUCLEOTIDE SEQUENCE [LARGE SCALE GENOMIC DNA]</scope>
    <source>
        <strain>ATCC 25196 / NCIMB 11849 / C 71</strain>
    </source>
</reference>
<evidence type="ECO:0000255" key="1">
    <source>
        <dbReference type="HAMAP-Rule" id="MF_01014"/>
    </source>
</evidence>
<dbReference type="EC" id="5.3.1.16" evidence="1"/>
<dbReference type="EMBL" id="CP000103">
    <property type="protein sequence ID" value="ABB74122.1"/>
    <property type="molecule type" value="Genomic_DNA"/>
</dbReference>
<dbReference type="RefSeq" id="WP_011380170.1">
    <property type="nucleotide sequence ID" value="NC_007614.1"/>
</dbReference>
<dbReference type="SMR" id="Q2YAU9"/>
<dbReference type="STRING" id="323848.Nmul_A0815"/>
<dbReference type="KEGG" id="nmu:Nmul_A0815"/>
<dbReference type="eggNOG" id="COG0106">
    <property type="taxonomic scope" value="Bacteria"/>
</dbReference>
<dbReference type="HOGENOM" id="CLU_048577_1_1_4"/>
<dbReference type="OrthoDB" id="9807749at2"/>
<dbReference type="UniPathway" id="UPA00031">
    <property type="reaction ID" value="UER00009"/>
</dbReference>
<dbReference type="Proteomes" id="UP000002718">
    <property type="component" value="Chromosome"/>
</dbReference>
<dbReference type="GO" id="GO:0005737">
    <property type="term" value="C:cytoplasm"/>
    <property type="evidence" value="ECO:0007669"/>
    <property type="project" value="UniProtKB-SubCell"/>
</dbReference>
<dbReference type="GO" id="GO:0003949">
    <property type="term" value="F:1-(5-phosphoribosyl)-5-[(5-phosphoribosylamino)methylideneamino]imidazole-4-carboxamide isomerase activity"/>
    <property type="evidence" value="ECO:0007669"/>
    <property type="project" value="UniProtKB-UniRule"/>
</dbReference>
<dbReference type="GO" id="GO:0000105">
    <property type="term" value="P:L-histidine biosynthetic process"/>
    <property type="evidence" value="ECO:0007669"/>
    <property type="project" value="UniProtKB-UniRule"/>
</dbReference>
<dbReference type="GO" id="GO:0000162">
    <property type="term" value="P:L-tryptophan biosynthetic process"/>
    <property type="evidence" value="ECO:0007669"/>
    <property type="project" value="TreeGrafter"/>
</dbReference>
<dbReference type="CDD" id="cd04732">
    <property type="entry name" value="HisA"/>
    <property type="match status" value="1"/>
</dbReference>
<dbReference type="FunFam" id="3.20.20.70:FF:000009">
    <property type="entry name" value="1-(5-phosphoribosyl)-5-[(5-phosphoribosylamino)methylideneamino] imidazole-4-carboxamide isomerase"/>
    <property type="match status" value="1"/>
</dbReference>
<dbReference type="Gene3D" id="3.20.20.70">
    <property type="entry name" value="Aldolase class I"/>
    <property type="match status" value="1"/>
</dbReference>
<dbReference type="HAMAP" id="MF_01014">
    <property type="entry name" value="HisA"/>
    <property type="match status" value="1"/>
</dbReference>
<dbReference type="InterPro" id="IPR013785">
    <property type="entry name" value="Aldolase_TIM"/>
</dbReference>
<dbReference type="InterPro" id="IPR006062">
    <property type="entry name" value="His_biosynth"/>
</dbReference>
<dbReference type="InterPro" id="IPR006063">
    <property type="entry name" value="HisA_bact_arch"/>
</dbReference>
<dbReference type="InterPro" id="IPR044524">
    <property type="entry name" value="Isoase_HisA-like"/>
</dbReference>
<dbReference type="InterPro" id="IPR023016">
    <property type="entry name" value="Isoase_HisA-like_bact"/>
</dbReference>
<dbReference type="InterPro" id="IPR011060">
    <property type="entry name" value="RibuloseP-bd_barrel"/>
</dbReference>
<dbReference type="NCBIfam" id="TIGR00007">
    <property type="entry name" value="1-(5-phosphoribosyl)-5-[(5-phosphoribosylamino)methylideneamino]imidazole-4-carboxamide isomerase"/>
    <property type="match status" value="1"/>
</dbReference>
<dbReference type="NCBIfam" id="NF010112">
    <property type="entry name" value="PRK13585.1"/>
    <property type="match status" value="1"/>
</dbReference>
<dbReference type="PANTHER" id="PTHR43090">
    <property type="entry name" value="1-(5-PHOSPHORIBOSYL)-5-[(5-PHOSPHORIBOSYLAMINO)METHYLIDENEAMINO] IMIDAZOLE-4-CARBOXAMIDE ISOMERASE"/>
    <property type="match status" value="1"/>
</dbReference>
<dbReference type="PANTHER" id="PTHR43090:SF2">
    <property type="entry name" value="1-(5-PHOSPHORIBOSYL)-5-[(5-PHOSPHORIBOSYLAMINO)METHYLIDENEAMINO] IMIDAZOLE-4-CARBOXAMIDE ISOMERASE"/>
    <property type="match status" value="1"/>
</dbReference>
<dbReference type="Pfam" id="PF00977">
    <property type="entry name" value="His_biosynth"/>
    <property type="match status" value="1"/>
</dbReference>
<dbReference type="SUPFAM" id="SSF51366">
    <property type="entry name" value="Ribulose-phoshate binding barrel"/>
    <property type="match status" value="1"/>
</dbReference>
<protein>
    <recommendedName>
        <fullName evidence="1">1-(5-phosphoribosyl)-5-[(5-phosphoribosylamino)methylideneamino] imidazole-4-carboxamide isomerase</fullName>
        <ecNumber evidence="1">5.3.1.16</ecNumber>
    </recommendedName>
    <alternativeName>
        <fullName evidence="1">Phosphoribosylformimino-5-aminoimidazole carboxamide ribotide isomerase</fullName>
    </alternativeName>
</protein>
<proteinExistence type="inferred from homology"/>
<sequence>MLIIPAIDLKDGHCVRLKQGVMENVTVFSEDPAAMARHWLDQGARRLHLVDLNGAFAGKPKNELAIRDIVDAIGDEIPTQLGGGIRDLETIERYLDDGITYIIIGTAAVKTPGFLHDACNAFPGHIMVGLDAKDGKVAVNGWSKVTGHDVVDLAKKFEDYGVEAIIYTDIGRDGMLSGVNLKATLELARALTIPVIASGGVSSLDDVKALCEMEPEGIAGAITGRAIYEGTLDFKVAQELADELSTQSSPRDTTILF</sequence>
<name>HIS4_NITMU</name>
<keyword id="KW-0028">Amino-acid biosynthesis</keyword>
<keyword id="KW-0963">Cytoplasm</keyword>
<keyword id="KW-0368">Histidine biosynthesis</keyword>
<keyword id="KW-0413">Isomerase</keyword>
<keyword id="KW-1185">Reference proteome</keyword>
<organism>
    <name type="scientific">Nitrosospira multiformis (strain ATCC 25196 / NCIMB 11849 / C 71)</name>
    <dbReference type="NCBI Taxonomy" id="323848"/>
    <lineage>
        <taxon>Bacteria</taxon>
        <taxon>Pseudomonadati</taxon>
        <taxon>Pseudomonadota</taxon>
        <taxon>Betaproteobacteria</taxon>
        <taxon>Nitrosomonadales</taxon>
        <taxon>Nitrosomonadaceae</taxon>
        <taxon>Nitrosospira</taxon>
    </lineage>
</organism>
<comment type="catalytic activity">
    <reaction evidence="1">
        <text>1-(5-phospho-beta-D-ribosyl)-5-[(5-phospho-beta-D-ribosylamino)methylideneamino]imidazole-4-carboxamide = 5-[(5-phospho-1-deoxy-D-ribulos-1-ylimino)methylamino]-1-(5-phospho-beta-D-ribosyl)imidazole-4-carboxamide</text>
        <dbReference type="Rhea" id="RHEA:15469"/>
        <dbReference type="ChEBI" id="CHEBI:58435"/>
        <dbReference type="ChEBI" id="CHEBI:58525"/>
        <dbReference type="EC" id="5.3.1.16"/>
    </reaction>
</comment>
<comment type="pathway">
    <text evidence="1">Amino-acid biosynthesis; L-histidine biosynthesis; L-histidine from 5-phospho-alpha-D-ribose 1-diphosphate: step 4/9.</text>
</comment>
<comment type="subcellular location">
    <subcellularLocation>
        <location evidence="1">Cytoplasm</location>
    </subcellularLocation>
</comment>
<comment type="similarity">
    <text evidence="1">Belongs to the HisA/HisF family.</text>
</comment>
<feature type="chain" id="PRO_0000229065" description="1-(5-phosphoribosyl)-5-[(5-phosphoribosylamino)methylideneamino] imidazole-4-carboxamide isomerase">
    <location>
        <begin position="1"/>
        <end position="257"/>
    </location>
</feature>
<feature type="active site" description="Proton acceptor" evidence="1">
    <location>
        <position position="8"/>
    </location>
</feature>
<feature type="active site" description="Proton donor" evidence="1">
    <location>
        <position position="131"/>
    </location>
</feature>
<accession>Q2YAU9</accession>